<feature type="chain" id="PRO_0000403430" description="Uncharacterized protein VP8">
    <location>
        <begin position="1"/>
        <end position="481"/>
    </location>
</feature>
<name>VP8_MYRV9</name>
<dbReference type="EMBL" id="AB179640">
    <property type="protein sequence ID" value="BAD51418.1"/>
    <property type="molecule type" value="Genomic_RNA"/>
</dbReference>
<dbReference type="RefSeq" id="YP_001936011.1">
    <property type="nucleotide sequence ID" value="NC_010750.1"/>
</dbReference>
<dbReference type="GeneID" id="6334550"/>
<dbReference type="KEGG" id="vg:6334550"/>
<dbReference type="Proteomes" id="UP000006719">
    <property type="component" value="Genome"/>
</dbReference>
<gene>
    <name type="primary">S8</name>
</gene>
<sequence>MADLTSTSVNQTVLATQPLTTRELQQIRSMVQTSSNLMQFGNHTALPDSYLETFLFNNGVVYEDGDVFYAWSETVHHPTFLDAQDQRYSLELHPIEHDQTVSPNVSHSVWWQCADFNKFRTLSVFGRRVVPRVRYHVDEFTITFSVSVPLRCRSFQDYYDIHVQMKMRTPSPSVHDPTHISLASEIESISNDNDVSVPAVVSQPNEITINVGALTPYVGHSSKLAGAALSMIMNIPRKPVPASPAPRVHPAVLLTHSFFDFVREQISRMDATIMPIHLVEQTFPEAFLAIPVPRDIETGLVTALRSVAMVPTSQYNLHVMAERVQSQSMDWTGGNFSRIPMHDDDIIMTHDTITALSTGVSTYHHHLAITEDDMAVIKSRVPGVIKYRGSIDDLKALSNLLESPRTHQVLLHSIATIHIYDIGDESEIDDQEMYSKKISFLFLLAYLMECVTLPTTLSQGFEPRLPLLPSSRVPFYLAFGV</sequence>
<organismHost>
    <name type="scientific">Cryphonectria parasitica</name>
    <name type="common">Chestnut blight fungus</name>
    <name type="synonym">Endothia parasitica</name>
    <dbReference type="NCBI Taxonomy" id="5116"/>
</organismHost>
<keyword id="KW-1185">Reference proteome</keyword>
<accession>Q65YU8</accession>
<proteinExistence type="predicted"/>
<organism>
    <name type="scientific">Cryphonectria parasitica mycoreovirus 1 (strain 9B21)</name>
    <name type="common">CpMYRV-1</name>
    <dbReference type="NCBI Taxonomy" id="230407"/>
    <lineage>
        <taxon>Viruses</taxon>
        <taxon>Riboviria</taxon>
        <taxon>Orthornavirae</taxon>
        <taxon>Duplornaviricota</taxon>
        <taxon>Resentoviricetes</taxon>
        <taxon>Reovirales</taxon>
        <taxon>Spinareoviridae</taxon>
        <taxon>Mycoreovirus</taxon>
        <taxon>Mycoreovirus 1</taxon>
    </lineage>
</organism>
<protein>
    <recommendedName>
        <fullName>Uncharacterized protein VP8</fullName>
    </recommendedName>
</protein>
<reference key="1">
    <citation type="journal article" date="2004" name="J. Gen. Virol.">
        <title>Complete genome sequence of Mycoreovirus-1/Cp9B21, a member of a novel genus within the family Reoviridae, isolated from the chestnut blight fungus Cryphonectria parasitica.</title>
        <authorList>
            <person name="Suzuki N."/>
            <person name="Supyani S."/>
            <person name="Maruyama K."/>
            <person name="Hillman B.I."/>
        </authorList>
    </citation>
    <scope>NUCLEOTIDE SEQUENCE [GENOMIC RNA]</scope>
</reference>